<protein>
    <recommendedName>
        <fullName>Serine/threonine-protein kinase 38-like</fullName>
        <ecNumber>2.7.11.1</ecNumber>
    </recommendedName>
    <alternativeName>
        <fullName>NDR2 protein kinase</fullName>
    </alternativeName>
    <alternativeName>
        <fullName>Nuclear Dbf2-related kinase 2</fullName>
    </alternativeName>
</protein>
<evidence type="ECO:0000250" key="1"/>
<evidence type="ECO:0000250" key="2">
    <source>
        <dbReference type="UniProtKB" id="O95835"/>
    </source>
</evidence>
<evidence type="ECO:0000255" key="3">
    <source>
        <dbReference type="PROSITE-ProRule" id="PRU00159"/>
    </source>
</evidence>
<evidence type="ECO:0000255" key="4">
    <source>
        <dbReference type="PROSITE-ProRule" id="PRU00618"/>
    </source>
</evidence>
<evidence type="ECO:0000255" key="5">
    <source>
        <dbReference type="PROSITE-ProRule" id="PRU10027"/>
    </source>
</evidence>
<evidence type="ECO:0000269" key="6">
    <source>
    </source>
</evidence>
<evidence type="ECO:0000269" key="7">
    <source>
    </source>
</evidence>
<evidence type="ECO:0000269" key="8">
    <source>
    </source>
</evidence>
<evidence type="ECO:0000269" key="9">
    <source>
    </source>
</evidence>
<evidence type="ECO:0000269" key="10">
    <source ref="8"/>
</evidence>
<evidence type="ECO:0000303" key="11">
    <source>
    </source>
</evidence>
<evidence type="ECO:0000303" key="12">
    <source>
    </source>
</evidence>
<evidence type="ECO:0000305" key="13"/>
<evidence type="ECO:0000312" key="14">
    <source>
        <dbReference type="EMBL" id="AAH28603.1"/>
    </source>
</evidence>
<evidence type="ECO:0000312" key="15">
    <source>
        <dbReference type="EMBL" id="BAA76809.2"/>
    </source>
</evidence>
<evidence type="ECO:0007829" key="16">
    <source>
        <dbReference type="PDB" id="5XQZ"/>
    </source>
</evidence>
<accession>Q9Y2H1</accession>
<accession>A8K4U0</accession>
<accession>B4E3J8</accession>
<accession>Q8TBX7</accession>
<feature type="initiator methionine" description="Removed" evidence="10">
    <location>
        <position position="1"/>
    </location>
</feature>
<feature type="chain" id="PRO_0000086720" description="Serine/threonine-protein kinase 38-like">
    <location>
        <begin position="2"/>
        <end position="464"/>
    </location>
</feature>
<feature type="domain" description="Protein kinase" evidence="3">
    <location>
        <begin position="90"/>
        <end position="383"/>
    </location>
</feature>
<feature type="domain" description="AGC-kinase C-terminal" evidence="4">
    <location>
        <begin position="384"/>
        <end position="453"/>
    </location>
</feature>
<feature type="region of interest" description="S100B binding" evidence="1">
    <location>
        <begin position="63"/>
        <end position="88"/>
    </location>
</feature>
<feature type="active site" description="Proton acceptor" evidence="3 5">
    <location>
        <position position="213"/>
    </location>
</feature>
<feature type="binding site" evidence="2 3">
    <location>
        <begin position="96"/>
        <end position="104"/>
    </location>
    <ligand>
        <name>ATP</name>
        <dbReference type="ChEBI" id="CHEBI:30616"/>
    </ligand>
</feature>
<feature type="binding site" evidence="3 6">
    <location>
        <position position="119"/>
    </location>
    <ligand>
        <name>ATP</name>
        <dbReference type="ChEBI" id="CHEBI:30616"/>
    </ligand>
</feature>
<feature type="modified residue" description="N-acetylalanine" evidence="10">
    <location>
        <position position="2"/>
    </location>
</feature>
<feature type="modified residue" description="Phosphothreonine" evidence="6">
    <location>
        <position position="75"/>
    </location>
</feature>
<feature type="modified residue" description="Phosphoserine; by autocatalysis" evidence="6">
    <location>
        <position position="282"/>
    </location>
</feature>
<feature type="modified residue" description="Phosphothreonine; by STK24/MST3" evidence="6 8">
    <location>
        <position position="442"/>
    </location>
</feature>
<feature type="splice variant" id="VSP_056233" description="In isoform 2." evidence="11">
    <location>
        <begin position="1"/>
        <end position="52"/>
    </location>
</feature>
<feature type="splice variant" id="VSP_056234" description="In isoform 2." evidence="11">
    <location>
        <begin position="62"/>
        <end position="102"/>
    </location>
</feature>
<feature type="sequence variant" id="VAR_041199" description="In a aLL TEL/AML1+ sample; somatic mutation." evidence="9">
    <original>G</original>
    <variation>A</variation>
    <location>
        <position position="99"/>
    </location>
</feature>
<feature type="mutagenesis site" description="Decreased kinase activity. Reduced binding of S100B." evidence="6">
    <original>T</original>
    <variation>A</variation>
    <location>
        <position position="75"/>
    </location>
</feature>
<feature type="mutagenesis site" description="Loss of autophosphorylation and kinase activity." evidence="6">
    <original>K</original>
    <variation>A</variation>
    <location>
        <position position="119"/>
    </location>
</feature>
<feature type="mutagenesis site" description="Loss of autophosphorylation and kinase activity." evidence="6">
    <original>S</original>
    <variation>A</variation>
    <location>
        <position position="282"/>
    </location>
</feature>
<feature type="mutagenesis site" description="Decreased kinase activity." evidence="6">
    <original>T</original>
    <variation>A</variation>
    <location>
        <position position="442"/>
    </location>
</feature>
<feature type="helix" evidence="16">
    <location>
        <begin position="25"/>
        <end position="56"/>
    </location>
</feature>
<feature type="helix" evidence="16">
    <location>
        <begin position="60"/>
        <end position="83"/>
    </location>
</feature>
<sequence>MAMTAGTTTTFPMSNHTRERVTVAKLTLENFYSNLILQHEERETRQKKLEVAMEEEGLADEEKKLRRSQHARKETEFLRLKRTRLGLDDFESLKVIGRGAFGEVRLVQKKDTGHIYAMKILRKSDMLEKEQVAHIRAERDILVEADGAWVVKMFYSFQDKRNLYLIMEFLPGGDMMTLLMKKDTLTEEETQFYISETVLAIDAIHQLGFIHRDIKPDNLLLDAKGHVKLSDFGLCTGLKKAHRTEFYRNLTHNPPSDFSFQNMNSKRKAETWKKNRRQLAYSTVGTPDYIAPEVFMQTGYNKLCDWWSLGVIMYEMLIGYPPFCSETPQETYRKVMNWKETLVFPPEVPISEKAKDLILRFCIDSENRIGNSGVEEIKGHPFFEGVDWEHIRERPAAIPIEIKSIDDTSNFDDFPESDILQPVPNTTEPDYKSKDWVFLNYTYKRFEGLTQRGSIPTYMKAGKL</sequence>
<reference evidence="13" key="1">
    <citation type="journal article" date="2004" name="J. Biol. Chem.">
        <title>Regulation of NDR2 protein kinase by multi-site phosphorylation and the S100B calcium-binding protein.</title>
        <authorList>
            <person name="Stegert M.R."/>
            <person name="Tamaskovic R."/>
            <person name="Bichsel S.J."/>
            <person name="Hergovich A."/>
            <person name="Hemmings B.A."/>
        </authorList>
    </citation>
    <scope>NUCLEOTIDE SEQUENCE [MRNA] (ISOFORM 1)</scope>
    <scope>FUNCTION</scope>
    <scope>SUBCELLULAR LOCATION</scope>
    <scope>ACTIVITY REGULATION</scope>
    <scope>INTERACTION WITH S100</scope>
    <scope>PHOSPHORYLATION AT THR-75; SER-282 AND THR-442</scope>
    <scope>MUTAGENESIS OF THR-75; LYS-119; SER-282 AND THR-442</scope>
    <source>
        <tissue evidence="6">Brain</tissue>
    </source>
</reference>
<reference evidence="15" key="2">
    <citation type="journal article" date="1999" name="DNA Res.">
        <title>Prediction of the coding sequences of unidentified human genes. XIII. The complete sequences of 100 new cDNA clones from brain which code for large proteins in vitro.</title>
        <authorList>
            <person name="Nagase T."/>
            <person name="Ishikawa K."/>
            <person name="Suyama M."/>
            <person name="Kikuno R."/>
            <person name="Hirosawa M."/>
            <person name="Miyajima N."/>
            <person name="Tanaka A."/>
            <person name="Kotani H."/>
            <person name="Nomura N."/>
            <person name="Ohara O."/>
        </authorList>
    </citation>
    <scope>NUCLEOTIDE SEQUENCE [LARGE SCALE MRNA] (ISOFORM 1)</scope>
    <source>
        <tissue evidence="15">Brain</tissue>
    </source>
</reference>
<reference key="3">
    <citation type="journal article" date="2002" name="DNA Res.">
        <title>Construction of expression-ready cDNA clones for KIAA genes: manual curation of 330 KIAA cDNA clones.</title>
        <authorList>
            <person name="Nakajima D."/>
            <person name="Okazaki N."/>
            <person name="Yamakawa H."/>
            <person name="Kikuno R."/>
            <person name="Ohara O."/>
            <person name="Nagase T."/>
        </authorList>
    </citation>
    <scope>SEQUENCE REVISION</scope>
</reference>
<reference key="4">
    <citation type="journal article" date="2004" name="Nat. Genet.">
        <title>Complete sequencing and characterization of 21,243 full-length human cDNAs.</title>
        <authorList>
            <person name="Ota T."/>
            <person name="Suzuki Y."/>
            <person name="Nishikawa T."/>
            <person name="Otsuki T."/>
            <person name="Sugiyama T."/>
            <person name="Irie R."/>
            <person name="Wakamatsu A."/>
            <person name="Hayashi K."/>
            <person name="Sato H."/>
            <person name="Nagai K."/>
            <person name="Kimura K."/>
            <person name="Makita H."/>
            <person name="Sekine M."/>
            <person name="Obayashi M."/>
            <person name="Nishi T."/>
            <person name="Shibahara T."/>
            <person name="Tanaka T."/>
            <person name="Ishii S."/>
            <person name="Yamamoto J."/>
            <person name="Saito K."/>
            <person name="Kawai Y."/>
            <person name="Isono Y."/>
            <person name="Nakamura Y."/>
            <person name="Nagahari K."/>
            <person name="Murakami K."/>
            <person name="Yasuda T."/>
            <person name="Iwayanagi T."/>
            <person name="Wagatsuma M."/>
            <person name="Shiratori A."/>
            <person name="Sudo H."/>
            <person name="Hosoiri T."/>
            <person name="Kaku Y."/>
            <person name="Kodaira H."/>
            <person name="Kondo H."/>
            <person name="Sugawara M."/>
            <person name="Takahashi M."/>
            <person name="Kanda K."/>
            <person name="Yokoi T."/>
            <person name="Furuya T."/>
            <person name="Kikkawa E."/>
            <person name="Omura Y."/>
            <person name="Abe K."/>
            <person name="Kamihara K."/>
            <person name="Katsuta N."/>
            <person name="Sato K."/>
            <person name="Tanikawa M."/>
            <person name="Yamazaki M."/>
            <person name="Ninomiya K."/>
            <person name="Ishibashi T."/>
            <person name="Yamashita H."/>
            <person name="Murakawa K."/>
            <person name="Fujimori K."/>
            <person name="Tanai H."/>
            <person name="Kimata M."/>
            <person name="Watanabe M."/>
            <person name="Hiraoka S."/>
            <person name="Chiba Y."/>
            <person name="Ishida S."/>
            <person name="Ono Y."/>
            <person name="Takiguchi S."/>
            <person name="Watanabe S."/>
            <person name="Yosida M."/>
            <person name="Hotuta T."/>
            <person name="Kusano J."/>
            <person name="Kanehori K."/>
            <person name="Takahashi-Fujii A."/>
            <person name="Hara H."/>
            <person name="Tanase T.-O."/>
            <person name="Nomura Y."/>
            <person name="Togiya S."/>
            <person name="Komai F."/>
            <person name="Hara R."/>
            <person name="Takeuchi K."/>
            <person name="Arita M."/>
            <person name="Imose N."/>
            <person name="Musashino K."/>
            <person name="Yuuki H."/>
            <person name="Oshima A."/>
            <person name="Sasaki N."/>
            <person name="Aotsuka S."/>
            <person name="Yoshikawa Y."/>
            <person name="Matsunawa H."/>
            <person name="Ichihara T."/>
            <person name="Shiohata N."/>
            <person name="Sano S."/>
            <person name="Moriya S."/>
            <person name="Momiyama H."/>
            <person name="Satoh N."/>
            <person name="Takami S."/>
            <person name="Terashima Y."/>
            <person name="Suzuki O."/>
            <person name="Nakagawa S."/>
            <person name="Senoh A."/>
            <person name="Mizoguchi H."/>
            <person name="Goto Y."/>
            <person name="Shimizu F."/>
            <person name="Wakebe H."/>
            <person name="Hishigaki H."/>
            <person name="Watanabe T."/>
            <person name="Sugiyama A."/>
            <person name="Takemoto M."/>
            <person name="Kawakami B."/>
            <person name="Yamazaki M."/>
            <person name="Watanabe K."/>
            <person name="Kumagai A."/>
            <person name="Itakura S."/>
            <person name="Fukuzumi Y."/>
            <person name="Fujimori Y."/>
            <person name="Komiyama M."/>
            <person name="Tashiro H."/>
            <person name="Tanigami A."/>
            <person name="Fujiwara T."/>
            <person name="Ono T."/>
            <person name="Yamada K."/>
            <person name="Fujii Y."/>
            <person name="Ozaki K."/>
            <person name="Hirao M."/>
            <person name="Ohmori Y."/>
            <person name="Kawabata A."/>
            <person name="Hikiji T."/>
            <person name="Kobatake N."/>
            <person name="Inagaki H."/>
            <person name="Ikema Y."/>
            <person name="Okamoto S."/>
            <person name="Okitani R."/>
            <person name="Kawakami T."/>
            <person name="Noguchi S."/>
            <person name="Itoh T."/>
            <person name="Shigeta K."/>
            <person name="Senba T."/>
            <person name="Matsumura K."/>
            <person name="Nakajima Y."/>
            <person name="Mizuno T."/>
            <person name="Morinaga M."/>
            <person name="Sasaki M."/>
            <person name="Togashi T."/>
            <person name="Oyama M."/>
            <person name="Hata H."/>
            <person name="Watanabe M."/>
            <person name="Komatsu T."/>
            <person name="Mizushima-Sugano J."/>
            <person name="Satoh T."/>
            <person name="Shirai Y."/>
            <person name="Takahashi Y."/>
            <person name="Nakagawa K."/>
            <person name="Okumura K."/>
            <person name="Nagase T."/>
            <person name="Nomura N."/>
            <person name="Kikuchi H."/>
            <person name="Masuho Y."/>
            <person name="Yamashita R."/>
            <person name="Nakai K."/>
            <person name="Yada T."/>
            <person name="Nakamura Y."/>
            <person name="Ohara O."/>
            <person name="Isogai T."/>
            <person name="Sugano S."/>
        </authorList>
    </citation>
    <scope>NUCLEOTIDE SEQUENCE [LARGE SCALE MRNA] (ISOFORMS 1 AND 2)</scope>
    <source>
        <tissue>Uterus</tissue>
    </source>
</reference>
<reference key="5">
    <citation type="journal article" date="2006" name="Nature">
        <title>The finished DNA sequence of human chromosome 12.</title>
        <authorList>
            <person name="Scherer S.E."/>
            <person name="Muzny D.M."/>
            <person name="Buhay C.J."/>
            <person name="Chen R."/>
            <person name="Cree A."/>
            <person name="Ding Y."/>
            <person name="Dugan-Rocha S."/>
            <person name="Gill R."/>
            <person name="Gunaratne P."/>
            <person name="Harris R.A."/>
            <person name="Hawes A.C."/>
            <person name="Hernandez J."/>
            <person name="Hodgson A.V."/>
            <person name="Hume J."/>
            <person name="Jackson A."/>
            <person name="Khan Z.M."/>
            <person name="Kovar-Smith C."/>
            <person name="Lewis L.R."/>
            <person name="Lozado R.J."/>
            <person name="Metzker M.L."/>
            <person name="Milosavljevic A."/>
            <person name="Miner G.R."/>
            <person name="Montgomery K.T."/>
            <person name="Morgan M.B."/>
            <person name="Nazareth L.V."/>
            <person name="Scott G."/>
            <person name="Sodergren E."/>
            <person name="Song X.-Z."/>
            <person name="Steffen D."/>
            <person name="Lovering R.C."/>
            <person name="Wheeler D.A."/>
            <person name="Worley K.C."/>
            <person name="Yuan Y."/>
            <person name="Zhang Z."/>
            <person name="Adams C.Q."/>
            <person name="Ansari-Lari M.A."/>
            <person name="Ayele M."/>
            <person name="Brown M.J."/>
            <person name="Chen G."/>
            <person name="Chen Z."/>
            <person name="Clerc-Blankenburg K.P."/>
            <person name="Davis C."/>
            <person name="Delgado O."/>
            <person name="Dinh H.H."/>
            <person name="Draper H."/>
            <person name="Gonzalez-Garay M.L."/>
            <person name="Havlak P."/>
            <person name="Jackson L.R."/>
            <person name="Jacob L.S."/>
            <person name="Kelly S.H."/>
            <person name="Li L."/>
            <person name="Li Z."/>
            <person name="Liu J."/>
            <person name="Liu W."/>
            <person name="Lu J."/>
            <person name="Maheshwari M."/>
            <person name="Nguyen B.-V."/>
            <person name="Okwuonu G.O."/>
            <person name="Pasternak S."/>
            <person name="Perez L.M."/>
            <person name="Plopper F.J.H."/>
            <person name="Santibanez J."/>
            <person name="Shen H."/>
            <person name="Tabor P.E."/>
            <person name="Verduzco D."/>
            <person name="Waldron L."/>
            <person name="Wang Q."/>
            <person name="Williams G.A."/>
            <person name="Zhang J."/>
            <person name="Zhou J."/>
            <person name="Allen C.C."/>
            <person name="Amin A.G."/>
            <person name="Anyalebechi V."/>
            <person name="Bailey M."/>
            <person name="Barbaria J.A."/>
            <person name="Bimage K.E."/>
            <person name="Bryant N.P."/>
            <person name="Burch P.E."/>
            <person name="Burkett C.E."/>
            <person name="Burrell K.L."/>
            <person name="Calderon E."/>
            <person name="Cardenas V."/>
            <person name="Carter K."/>
            <person name="Casias K."/>
            <person name="Cavazos I."/>
            <person name="Cavazos S.R."/>
            <person name="Ceasar H."/>
            <person name="Chacko J."/>
            <person name="Chan S.N."/>
            <person name="Chavez D."/>
            <person name="Christopoulos C."/>
            <person name="Chu J."/>
            <person name="Cockrell R."/>
            <person name="Cox C.D."/>
            <person name="Dang M."/>
            <person name="Dathorne S.R."/>
            <person name="David R."/>
            <person name="Davis C.M."/>
            <person name="Davy-Carroll L."/>
            <person name="Deshazo D.R."/>
            <person name="Donlin J.E."/>
            <person name="D'Souza L."/>
            <person name="Eaves K.A."/>
            <person name="Egan A."/>
            <person name="Emery-Cohen A.J."/>
            <person name="Escotto M."/>
            <person name="Flagg N."/>
            <person name="Forbes L.D."/>
            <person name="Gabisi A.M."/>
            <person name="Garza M."/>
            <person name="Hamilton C."/>
            <person name="Henderson N."/>
            <person name="Hernandez O."/>
            <person name="Hines S."/>
            <person name="Hogues M.E."/>
            <person name="Huang M."/>
            <person name="Idlebird D.G."/>
            <person name="Johnson R."/>
            <person name="Jolivet A."/>
            <person name="Jones S."/>
            <person name="Kagan R."/>
            <person name="King L.M."/>
            <person name="Leal B."/>
            <person name="Lebow H."/>
            <person name="Lee S."/>
            <person name="LeVan J.M."/>
            <person name="Lewis L.C."/>
            <person name="London P."/>
            <person name="Lorensuhewa L.M."/>
            <person name="Loulseged H."/>
            <person name="Lovett D.A."/>
            <person name="Lucier A."/>
            <person name="Lucier R.L."/>
            <person name="Ma J."/>
            <person name="Madu R.C."/>
            <person name="Mapua P."/>
            <person name="Martindale A.D."/>
            <person name="Martinez E."/>
            <person name="Massey E."/>
            <person name="Mawhiney S."/>
            <person name="Meador M.G."/>
            <person name="Mendez S."/>
            <person name="Mercado C."/>
            <person name="Mercado I.C."/>
            <person name="Merritt C.E."/>
            <person name="Miner Z.L."/>
            <person name="Minja E."/>
            <person name="Mitchell T."/>
            <person name="Mohabbat F."/>
            <person name="Mohabbat K."/>
            <person name="Montgomery B."/>
            <person name="Moore N."/>
            <person name="Morris S."/>
            <person name="Munidasa M."/>
            <person name="Ngo R.N."/>
            <person name="Nguyen N.B."/>
            <person name="Nickerson E."/>
            <person name="Nwaokelemeh O.O."/>
            <person name="Nwokenkwo S."/>
            <person name="Obregon M."/>
            <person name="Oguh M."/>
            <person name="Oragunye N."/>
            <person name="Oviedo R.J."/>
            <person name="Parish B.J."/>
            <person name="Parker D.N."/>
            <person name="Parrish J."/>
            <person name="Parks K.L."/>
            <person name="Paul H.A."/>
            <person name="Payton B.A."/>
            <person name="Perez A."/>
            <person name="Perrin W."/>
            <person name="Pickens A."/>
            <person name="Primus E.L."/>
            <person name="Pu L.-L."/>
            <person name="Puazo M."/>
            <person name="Quiles M.M."/>
            <person name="Quiroz J.B."/>
            <person name="Rabata D."/>
            <person name="Reeves K."/>
            <person name="Ruiz S.J."/>
            <person name="Shao H."/>
            <person name="Sisson I."/>
            <person name="Sonaike T."/>
            <person name="Sorelle R.P."/>
            <person name="Sutton A.E."/>
            <person name="Svatek A.F."/>
            <person name="Svetz L.A."/>
            <person name="Tamerisa K.S."/>
            <person name="Taylor T.R."/>
            <person name="Teague B."/>
            <person name="Thomas N."/>
            <person name="Thorn R.D."/>
            <person name="Trejos Z.Y."/>
            <person name="Trevino B.K."/>
            <person name="Ukegbu O.N."/>
            <person name="Urban J.B."/>
            <person name="Vasquez L.I."/>
            <person name="Vera V.A."/>
            <person name="Villasana D.M."/>
            <person name="Wang L."/>
            <person name="Ward-Moore S."/>
            <person name="Warren J.T."/>
            <person name="Wei X."/>
            <person name="White F."/>
            <person name="Williamson A.L."/>
            <person name="Wleczyk R."/>
            <person name="Wooden H.S."/>
            <person name="Wooden S.H."/>
            <person name="Yen J."/>
            <person name="Yoon L."/>
            <person name="Yoon V."/>
            <person name="Zorrilla S.E."/>
            <person name="Nelson D."/>
            <person name="Kucherlapati R."/>
            <person name="Weinstock G."/>
            <person name="Gibbs R.A."/>
        </authorList>
    </citation>
    <scope>NUCLEOTIDE SEQUENCE [LARGE SCALE GENOMIC DNA]</scope>
</reference>
<reference key="6">
    <citation type="submission" date="2005-07" db="EMBL/GenBank/DDBJ databases">
        <authorList>
            <person name="Mural R.J."/>
            <person name="Istrail S."/>
            <person name="Sutton G.G."/>
            <person name="Florea L."/>
            <person name="Halpern A.L."/>
            <person name="Mobarry C.M."/>
            <person name="Lippert R."/>
            <person name="Walenz B."/>
            <person name="Shatkay H."/>
            <person name="Dew I."/>
            <person name="Miller J.R."/>
            <person name="Flanigan M.J."/>
            <person name="Edwards N.J."/>
            <person name="Bolanos R."/>
            <person name="Fasulo D."/>
            <person name="Halldorsson B.V."/>
            <person name="Hannenhalli S."/>
            <person name="Turner R."/>
            <person name="Yooseph S."/>
            <person name="Lu F."/>
            <person name="Nusskern D.R."/>
            <person name="Shue B.C."/>
            <person name="Zheng X.H."/>
            <person name="Zhong F."/>
            <person name="Delcher A.L."/>
            <person name="Huson D.H."/>
            <person name="Kravitz S.A."/>
            <person name="Mouchard L."/>
            <person name="Reinert K."/>
            <person name="Remington K.A."/>
            <person name="Clark A.G."/>
            <person name="Waterman M.S."/>
            <person name="Eichler E.E."/>
            <person name="Adams M.D."/>
            <person name="Hunkapiller M.W."/>
            <person name="Myers E.W."/>
            <person name="Venter J.C."/>
        </authorList>
    </citation>
    <scope>NUCLEOTIDE SEQUENCE [LARGE SCALE GENOMIC DNA]</scope>
</reference>
<reference evidence="14" key="7">
    <citation type="journal article" date="2004" name="Genome Res.">
        <title>The status, quality, and expansion of the NIH full-length cDNA project: the Mammalian Gene Collection (MGC).</title>
        <authorList>
            <consortium name="The MGC Project Team"/>
        </authorList>
    </citation>
    <scope>NUCLEOTIDE SEQUENCE [LARGE SCALE MRNA] (ISOFORM 1)</scope>
    <source>
        <tissue evidence="14">Testis</tissue>
    </source>
</reference>
<reference key="8">
    <citation type="submission" date="2008-03" db="UniProtKB">
        <authorList>
            <person name="Bienvenut W.V."/>
            <person name="Vousden K.H."/>
            <person name="Lukashchuk N."/>
            <person name="Calvo F."/>
            <person name="Kolch W."/>
        </authorList>
    </citation>
    <scope>PROTEIN SEQUENCE OF 2-18; 26-42; 48-64; 73-79; 83-98; 123-161; 213-224; 229-240; 249-266; 340-392 AND 433-460</scope>
    <scope>CLEAVAGE OF INITIATOR METHIONINE</scope>
    <scope>ACETYLATION AT ALA-2</scope>
    <scope>IDENTIFICATION BY MASS SPECTROMETRY</scope>
    <source>
        <tissue>Cervix carcinoma</tissue>
        <tissue>Lung carcinoma</tissue>
    </source>
</reference>
<reference evidence="13" key="9">
    <citation type="journal article" date="2004" name="J. Biol. Chem.">
        <title>Human Mob proteins regulate the NDR1 and NDR2 serine-threonine kinases.</title>
        <authorList>
            <person name="Devroe E."/>
            <person name="Erdjument-Bromage H."/>
            <person name="Tempst P."/>
            <person name="Silver P.A."/>
        </authorList>
    </citation>
    <scope>FUNCTION</scope>
    <scope>SUBCELLULAR LOCATION</scope>
    <scope>TISSUE SPECIFICITY</scope>
    <scope>ACTIVITY REGULATION</scope>
    <scope>INTERACTION WITH MOB1 AND MOB2</scope>
</reference>
<reference key="10">
    <citation type="journal article" date="2005" name="Mol. Cell. Biol.">
        <title>Regulation of NDR protein kinase by hydrophobic motif phosphorylation mediated by the mammalian Ste20-like kinase MST3.</title>
        <authorList>
            <person name="Stegert M.R."/>
            <person name="Hergovich A."/>
            <person name="Tamaskovic R."/>
            <person name="Bichsel S.J."/>
            <person name="Hemmings B.A."/>
        </authorList>
    </citation>
    <scope>PHOSPHORYLATION AT THR-442</scope>
    <scope>ACTIVITY REGULATION</scope>
    <scope>SUBCELLULAR LOCATION</scope>
</reference>
<reference key="11">
    <citation type="journal article" date="2010" name="Sci. Signal.">
        <title>Quantitative phosphoproteomics reveals widespread full phosphorylation site occupancy during mitosis.</title>
        <authorList>
            <person name="Olsen J.V."/>
            <person name="Vermeulen M."/>
            <person name="Santamaria A."/>
            <person name="Kumar C."/>
            <person name="Miller M.L."/>
            <person name="Jensen L.J."/>
            <person name="Gnad F."/>
            <person name="Cox J."/>
            <person name="Jensen T.S."/>
            <person name="Nigg E.A."/>
            <person name="Brunak S."/>
            <person name="Mann M."/>
        </authorList>
    </citation>
    <scope>IDENTIFICATION BY MASS SPECTROMETRY [LARGE SCALE ANALYSIS]</scope>
    <source>
        <tissue>Cervix carcinoma</tissue>
    </source>
</reference>
<reference key="12">
    <citation type="journal article" date="2011" name="BMC Syst. Biol.">
        <title>Initial characterization of the human central proteome.</title>
        <authorList>
            <person name="Burkard T.R."/>
            <person name="Planyavsky M."/>
            <person name="Kaupe I."/>
            <person name="Breitwieser F.P."/>
            <person name="Buerckstuemmer T."/>
            <person name="Bennett K.L."/>
            <person name="Superti-Furga G."/>
            <person name="Colinge J."/>
        </authorList>
    </citation>
    <scope>IDENTIFICATION BY MASS SPECTROMETRY [LARGE SCALE ANALYSIS]</scope>
</reference>
<reference key="13">
    <citation type="journal article" date="2013" name="J. Proteome Res.">
        <title>Toward a comprehensive characterization of a human cancer cell phosphoproteome.</title>
        <authorList>
            <person name="Zhou H."/>
            <person name="Di Palma S."/>
            <person name="Preisinger C."/>
            <person name="Peng M."/>
            <person name="Polat A.N."/>
            <person name="Heck A.J."/>
            <person name="Mohammed S."/>
        </authorList>
    </citation>
    <scope>IDENTIFICATION BY MASS SPECTROMETRY [LARGE SCALE ANALYSIS]</scope>
    <source>
        <tissue>Erythroleukemia</tissue>
    </source>
</reference>
<reference key="14">
    <citation type="journal article" date="2007" name="Nature">
        <title>Patterns of somatic mutation in human cancer genomes.</title>
        <authorList>
            <person name="Greenman C."/>
            <person name="Stephens P."/>
            <person name="Smith R."/>
            <person name="Dalgliesh G.L."/>
            <person name="Hunter C."/>
            <person name="Bignell G."/>
            <person name="Davies H."/>
            <person name="Teague J."/>
            <person name="Butler A."/>
            <person name="Stevens C."/>
            <person name="Edkins S."/>
            <person name="O'Meara S."/>
            <person name="Vastrik I."/>
            <person name="Schmidt E.E."/>
            <person name="Avis T."/>
            <person name="Barthorpe S."/>
            <person name="Bhamra G."/>
            <person name="Buck G."/>
            <person name="Choudhury B."/>
            <person name="Clements J."/>
            <person name="Cole J."/>
            <person name="Dicks E."/>
            <person name="Forbes S."/>
            <person name="Gray K."/>
            <person name="Halliday K."/>
            <person name="Harrison R."/>
            <person name="Hills K."/>
            <person name="Hinton J."/>
            <person name="Jenkinson A."/>
            <person name="Jones D."/>
            <person name="Menzies A."/>
            <person name="Mironenko T."/>
            <person name="Perry J."/>
            <person name="Raine K."/>
            <person name="Richardson D."/>
            <person name="Shepherd R."/>
            <person name="Small A."/>
            <person name="Tofts C."/>
            <person name="Varian J."/>
            <person name="Webb T."/>
            <person name="West S."/>
            <person name="Widaa S."/>
            <person name="Yates A."/>
            <person name="Cahill D.P."/>
            <person name="Louis D.N."/>
            <person name="Goldstraw P."/>
            <person name="Nicholson A.G."/>
            <person name="Brasseur F."/>
            <person name="Looijenga L."/>
            <person name="Weber B.L."/>
            <person name="Chiew Y.-E."/>
            <person name="DeFazio A."/>
            <person name="Greaves M.F."/>
            <person name="Green A.R."/>
            <person name="Campbell P."/>
            <person name="Birney E."/>
            <person name="Easton D.F."/>
            <person name="Chenevix-Trench G."/>
            <person name="Tan M.-H."/>
            <person name="Khoo S.K."/>
            <person name="Teh B.T."/>
            <person name="Yuen S.T."/>
            <person name="Leung S.Y."/>
            <person name="Wooster R."/>
            <person name="Futreal P.A."/>
            <person name="Stratton M.R."/>
        </authorList>
    </citation>
    <scope>VARIANT [LARGE SCALE ANALYSIS] ALA-99</scope>
</reference>
<dbReference type="EC" id="2.7.11.1"/>
<dbReference type="EMBL" id="AB023182">
    <property type="protein sequence ID" value="BAA76809.2"/>
    <property type="molecule type" value="mRNA"/>
</dbReference>
<dbReference type="EMBL" id="AK291055">
    <property type="protein sequence ID" value="BAF83744.1"/>
    <property type="molecule type" value="mRNA"/>
</dbReference>
<dbReference type="EMBL" id="AK304755">
    <property type="protein sequence ID" value="BAG65510.1"/>
    <property type="molecule type" value="mRNA"/>
</dbReference>
<dbReference type="EMBL" id="AC092827">
    <property type="status" value="NOT_ANNOTATED_CDS"/>
    <property type="molecule type" value="Genomic_DNA"/>
</dbReference>
<dbReference type="EMBL" id="AC092829">
    <property type="status" value="NOT_ANNOTATED_CDS"/>
    <property type="molecule type" value="Genomic_DNA"/>
</dbReference>
<dbReference type="EMBL" id="CH471094">
    <property type="protein sequence ID" value="EAW96549.1"/>
    <property type="molecule type" value="Genomic_DNA"/>
</dbReference>
<dbReference type="EMBL" id="BC028603">
    <property type="protein sequence ID" value="AAH28603.1"/>
    <property type="molecule type" value="mRNA"/>
</dbReference>
<dbReference type="CCDS" id="CCDS31761.1">
    <molecule id="Q9Y2H1-1"/>
</dbReference>
<dbReference type="RefSeq" id="NP_055815.1">
    <molecule id="Q9Y2H1-1"/>
    <property type="nucleotide sequence ID" value="NM_015000.4"/>
</dbReference>
<dbReference type="RefSeq" id="XP_006719121.1">
    <property type="nucleotide sequence ID" value="XM_006719058.3"/>
</dbReference>
<dbReference type="RefSeq" id="XP_011518915.1">
    <property type="nucleotide sequence ID" value="XM_011520613.2"/>
</dbReference>
<dbReference type="RefSeq" id="XP_016874525.1">
    <property type="nucleotide sequence ID" value="XM_017019036.1"/>
</dbReference>
<dbReference type="PDB" id="5XQZ">
    <property type="method" value="X-ray"/>
    <property type="resolution" value="2.10 A"/>
    <property type="chains" value="C/D=25-87"/>
</dbReference>
<dbReference type="PDBsum" id="5XQZ"/>
<dbReference type="SMR" id="Q9Y2H1"/>
<dbReference type="BioGRID" id="116654">
    <property type="interactions" value="76"/>
</dbReference>
<dbReference type="FunCoup" id="Q9Y2H1">
    <property type="interactions" value="2128"/>
</dbReference>
<dbReference type="IntAct" id="Q9Y2H1">
    <property type="interactions" value="116"/>
</dbReference>
<dbReference type="MINT" id="Q9Y2H1"/>
<dbReference type="STRING" id="9606.ENSP00000373684"/>
<dbReference type="BindingDB" id="Q9Y2H1"/>
<dbReference type="ChEMBL" id="CHEMBL4851"/>
<dbReference type="DrugBank" id="DB12010">
    <property type="generic name" value="Fostamatinib"/>
</dbReference>
<dbReference type="DrugCentral" id="Q9Y2H1"/>
<dbReference type="iPTMnet" id="Q9Y2H1"/>
<dbReference type="PhosphoSitePlus" id="Q9Y2H1"/>
<dbReference type="BioMuta" id="STK38L"/>
<dbReference type="DMDM" id="56749668"/>
<dbReference type="CPTAC" id="non-CPTAC-6002"/>
<dbReference type="CPTAC" id="non-CPTAC-6003"/>
<dbReference type="jPOST" id="Q9Y2H1"/>
<dbReference type="MassIVE" id="Q9Y2H1"/>
<dbReference type="PaxDb" id="9606-ENSP00000373684"/>
<dbReference type="PeptideAtlas" id="Q9Y2H1"/>
<dbReference type="ProteomicsDB" id="5904"/>
<dbReference type="ProteomicsDB" id="85780">
    <molecule id="Q9Y2H1-1"/>
</dbReference>
<dbReference type="Pumba" id="Q9Y2H1"/>
<dbReference type="Antibodypedia" id="24379">
    <property type="antibodies" value="262 antibodies from 28 providers"/>
</dbReference>
<dbReference type="DNASU" id="23012"/>
<dbReference type="Ensembl" id="ENST00000389032.8">
    <molecule id="Q9Y2H1-1"/>
    <property type="protein sequence ID" value="ENSP00000373684.3"/>
    <property type="gene ID" value="ENSG00000211455.8"/>
</dbReference>
<dbReference type="GeneID" id="23012"/>
<dbReference type="KEGG" id="hsa:23012"/>
<dbReference type="MANE-Select" id="ENST00000389032.8">
    <property type="protein sequence ID" value="ENSP00000373684.3"/>
    <property type="RefSeq nucleotide sequence ID" value="NM_015000.4"/>
    <property type="RefSeq protein sequence ID" value="NP_055815.1"/>
</dbReference>
<dbReference type="UCSC" id="uc001rhr.4">
    <molecule id="Q9Y2H1-1"/>
    <property type="organism name" value="human"/>
</dbReference>
<dbReference type="AGR" id="HGNC:17848"/>
<dbReference type="CTD" id="23012"/>
<dbReference type="DisGeNET" id="23012"/>
<dbReference type="GeneCards" id="STK38L"/>
<dbReference type="HGNC" id="HGNC:17848">
    <property type="gene designation" value="STK38L"/>
</dbReference>
<dbReference type="HPA" id="ENSG00000211455">
    <property type="expression patterns" value="Low tissue specificity"/>
</dbReference>
<dbReference type="MalaCards" id="STK38L"/>
<dbReference type="MIM" id="615836">
    <property type="type" value="gene"/>
</dbReference>
<dbReference type="neXtProt" id="NX_Q9Y2H1"/>
<dbReference type="OpenTargets" id="ENSG00000211455"/>
<dbReference type="PharmGKB" id="PA38252"/>
<dbReference type="VEuPathDB" id="HostDB:ENSG00000211455"/>
<dbReference type="eggNOG" id="KOG0605">
    <property type="taxonomic scope" value="Eukaryota"/>
</dbReference>
<dbReference type="GeneTree" id="ENSGT00940000153544"/>
<dbReference type="HOGENOM" id="CLU_000288_67_2_1"/>
<dbReference type="InParanoid" id="Q9Y2H1"/>
<dbReference type="OMA" id="HDNAYYQ"/>
<dbReference type="OrthoDB" id="3638488at2759"/>
<dbReference type="PAN-GO" id="Q9Y2H1">
    <property type="GO annotations" value="3 GO annotations based on evolutionary models"/>
</dbReference>
<dbReference type="PhylomeDB" id="Q9Y2H1"/>
<dbReference type="TreeFam" id="TF105337"/>
<dbReference type="PathwayCommons" id="Q9Y2H1"/>
<dbReference type="SignaLink" id="Q9Y2H1"/>
<dbReference type="SIGNOR" id="Q9Y2H1"/>
<dbReference type="BioGRID-ORCS" id="23012">
    <property type="hits" value="16 hits in 1195 CRISPR screens"/>
</dbReference>
<dbReference type="CD-CODE" id="8C2F96ED">
    <property type="entry name" value="Centrosome"/>
</dbReference>
<dbReference type="CD-CODE" id="FB4E32DD">
    <property type="entry name" value="Presynaptic clusters and postsynaptic densities"/>
</dbReference>
<dbReference type="ChiTaRS" id="STK38L">
    <property type="organism name" value="human"/>
</dbReference>
<dbReference type="GeneWiki" id="STK38L"/>
<dbReference type="GenomeRNAi" id="23012"/>
<dbReference type="Pharos" id="Q9Y2H1">
    <property type="development level" value="Tchem"/>
</dbReference>
<dbReference type="PRO" id="PR:Q9Y2H1"/>
<dbReference type="Proteomes" id="UP000005640">
    <property type="component" value="Chromosome 12"/>
</dbReference>
<dbReference type="RNAct" id="Q9Y2H1">
    <property type="molecule type" value="protein"/>
</dbReference>
<dbReference type="Bgee" id="ENSG00000211455">
    <property type="expression patterns" value="Expressed in ascending aorta and 201 other cell types or tissues"/>
</dbReference>
<dbReference type="ExpressionAtlas" id="Q9Y2H1">
    <property type="expression patterns" value="baseline and differential"/>
</dbReference>
<dbReference type="GO" id="GO:0015629">
    <property type="term" value="C:actin cytoskeleton"/>
    <property type="evidence" value="ECO:0000250"/>
    <property type="project" value="UniProtKB"/>
</dbReference>
<dbReference type="GO" id="GO:0005737">
    <property type="term" value="C:cytoplasm"/>
    <property type="evidence" value="ECO:0000314"/>
    <property type="project" value="UniProtKB"/>
</dbReference>
<dbReference type="GO" id="GO:0005829">
    <property type="term" value="C:cytosol"/>
    <property type="evidence" value="ECO:0000314"/>
    <property type="project" value="HPA"/>
</dbReference>
<dbReference type="GO" id="GO:0016020">
    <property type="term" value="C:membrane"/>
    <property type="evidence" value="ECO:0007669"/>
    <property type="project" value="UniProtKB-SubCell"/>
</dbReference>
<dbReference type="GO" id="GO:0003779">
    <property type="term" value="F:actin binding"/>
    <property type="evidence" value="ECO:0007669"/>
    <property type="project" value="UniProtKB-KW"/>
</dbReference>
<dbReference type="GO" id="GO:0005524">
    <property type="term" value="F:ATP binding"/>
    <property type="evidence" value="ECO:0000314"/>
    <property type="project" value="UniProtKB"/>
</dbReference>
<dbReference type="GO" id="GO:0000287">
    <property type="term" value="F:magnesium ion binding"/>
    <property type="evidence" value="ECO:0000314"/>
    <property type="project" value="UniProtKB"/>
</dbReference>
<dbReference type="GO" id="GO:0106310">
    <property type="term" value="F:protein serine kinase activity"/>
    <property type="evidence" value="ECO:0007669"/>
    <property type="project" value="RHEA"/>
</dbReference>
<dbReference type="GO" id="GO:0004674">
    <property type="term" value="F:protein serine/threonine kinase activity"/>
    <property type="evidence" value="ECO:0000314"/>
    <property type="project" value="UniProtKB"/>
</dbReference>
<dbReference type="GO" id="GO:0035556">
    <property type="term" value="P:intracellular signal transduction"/>
    <property type="evidence" value="ECO:0000314"/>
    <property type="project" value="UniProtKB"/>
</dbReference>
<dbReference type="GO" id="GO:0010507">
    <property type="term" value="P:negative regulation of autophagy"/>
    <property type="evidence" value="ECO:0000314"/>
    <property type="project" value="UniProt"/>
</dbReference>
<dbReference type="GO" id="GO:0006468">
    <property type="term" value="P:protein phosphorylation"/>
    <property type="evidence" value="ECO:0000314"/>
    <property type="project" value="UniProtKB"/>
</dbReference>
<dbReference type="GO" id="GO:0051128">
    <property type="term" value="P:regulation of cellular component organization"/>
    <property type="evidence" value="ECO:0000250"/>
    <property type="project" value="UniProtKB"/>
</dbReference>
<dbReference type="CDD" id="cd05627">
    <property type="entry name" value="STKc_NDR2"/>
    <property type="match status" value="1"/>
</dbReference>
<dbReference type="FunFam" id="1.10.510.10:FF:000057">
    <property type="entry name" value="Non-specific serine/threonine protein kinase"/>
    <property type="match status" value="1"/>
</dbReference>
<dbReference type="FunFam" id="1.10.510.10:FF:000086">
    <property type="entry name" value="Non-specific serine/threonine protein kinase"/>
    <property type="match status" value="1"/>
</dbReference>
<dbReference type="FunFam" id="3.30.200.20:FF:000118">
    <property type="entry name" value="Non-specific serine/threonine protein kinase"/>
    <property type="match status" value="1"/>
</dbReference>
<dbReference type="Gene3D" id="3.30.200.20">
    <property type="entry name" value="Phosphorylase Kinase, domain 1"/>
    <property type="match status" value="1"/>
</dbReference>
<dbReference type="Gene3D" id="1.10.510.10">
    <property type="entry name" value="Transferase(Phosphotransferase) domain 1"/>
    <property type="match status" value="2"/>
</dbReference>
<dbReference type="InterPro" id="IPR000961">
    <property type="entry name" value="AGC-kinase_C"/>
</dbReference>
<dbReference type="InterPro" id="IPR011009">
    <property type="entry name" value="Kinase-like_dom_sf"/>
</dbReference>
<dbReference type="InterPro" id="IPR017892">
    <property type="entry name" value="Pkinase_C"/>
</dbReference>
<dbReference type="InterPro" id="IPR000719">
    <property type="entry name" value="Prot_kinase_dom"/>
</dbReference>
<dbReference type="InterPro" id="IPR017441">
    <property type="entry name" value="Protein_kinase_ATP_BS"/>
</dbReference>
<dbReference type="InterPro" id="IPR050839">
    <property type="entry name" value="Rho-assoc_Ser/Thr_Kinase"/>
</dbReference>
<dbReference type="InterPro" id="IPR008271">
    <property type="entry name" value="Ser/Thr_kinase_AS"/>
</dbReference>
<dbReference type="PANTHER" id="PTHR22988:SF76">
    <property type="entry name" value="CHROMOSOME UNDETERMINED SCAFFOLD_135, WHOLE GENOME SHOTGUN SEQUENCE"/>
    <property type="match status" value="1"/>
</dbReference>
<dbReference type="PANTHER" id="PTHR22988">
    <property type="entry name" value="MYOTONIC DYSTROPHY S/T KINASE-RELATED"/>
    <property type="match status" value="1"/>
</dbReference>
<dbReference type="Pfam" id="PF00069">
    <property type="entry name" value="Pkinase"/>
    <property type="match status" value="1"/>
</dbReference>
<dbReference type="Pfam" id="PF00433">
    <property type="entry name" value="Pkinase_C"/>
    <property type="match status" value="1"/>
</dbReference>
<dbReference type="SMART" id="SM00133">
    <property type="entry name" value="S_TK_X"/>
    <property type="match status" value="1"/>
</dbReference>
<dbReference type="SMART" id="SM00220">
    <property type="entry name" value="S_TKc"/>
    <property type="match status" value="1"/>
</dbReference>
<dbReference type="SUPFAM" id="SSF56112">
    <property type="entry name" value="Protein kinase-like (PK-like)"/>
    <property type="match status" value="1"/>
</dbReference>
<dbReference type="PROSITE" id="PS51285">
    <property type="entry name" value="AGC_KINASE_CTER"/>
    <property type="match status" value="1"/>
</dbReference>
<dbReference type="PROSITE" id="PS00107">
    <property type="entry name" value="PROTEIN_KINASE_ATP"/>
    <property type="match status" value="1"/>
</dbReference>
<dbReference type="PROSITE" id="PS50011">
    <property type="entry name" value="PROTEIN_KINASE_DOM"/>
    <property type="match status" value="1"/>
</dbReference>
<dbReference type="PROSITE" id="PS00108">
    <property type="entry name" value="PROTEIN_KINASE_ST"/>
    <property type="match status" value="1"/>
</dbReference>
<proteinExistence type="evidence at protein level"/>
<gene>
    <name evidence="14" type="primary">STK38L</name>
    <name evidence="15" type="synonym">KIAA0965</name>
    <name evidence="12" type="synonym">NDR2</name>
</gene>
<keyword id="KW-0002">3D-structure</keyword>
<keyword id="KW-0007">Acetylation</keyword>
<keyword id="KW-0009">Actin-binding</keyword>
<keyword id="KW-0025">Alternative splicing</keyword>
<keyword id="KW-0067">ATP-binding</keyword>
<keyword id="KW-0963">Cytoplasm</keyword>
<keyword id="KW-0206">Cytoskeleton</keyword>
<keyword id="KW-0903">Direct protein sequencing</keyword>
<keyword id="KW-0418">Kinase</keyword>
<keyword id="KW-0460">Magnesium</keyword>
<keyword id="KW-0472">Membrane</keyword>
<keyword id="KW-0479">Metal-binding</keyword>
<keyword id="KW-0547">Nucleotide-binding</keyword>
<keyword id="KW-0597">Phosphoprotein</keyword>
<keyword id="KW-1267">Proteomics identification</keyword>
<keyword id="KW-1185">Reference proteome</keyword>
<keyword id="KW-0723">Serine/threonine-protein kinase</keyword>
<keyword id="KW-0808">Transferase</keyword>
<organism>
    <name type="scientific">Homo sapiens</name>
    <name type="common">Human</name>
    <dbReference type="NCBI Taxonomy" id="9606"/>
    <lineage>
        <taxon>Eukaryota</taxon>
        <taxon>Metazoa</taxon>
        <taxon>Chordata</taxon>
        <taxon>Craniata</taxon>
        <taxon>Vertebrata</taxon>
        <taxon>Euteleostomi</taxon>
        <taxon>Mammalia</taxon>
        <taxon>Eutheria</taxon>
        <taxon>Euarchontoglires</taxon>
        <taxon>Primates</taxon>
        <taxon>Haplorrhini</taxon>
        <taxon>Catarrhini</taxon>
        <taxon>Hominidae</taxon>
        <taxon>Homo</taxon>
    </lineage>
</organism>
<name>ST38L_HUMAN</name>
<comment type="function">
    <text evidence="1 6 7">Involved in the regulation of structural processes in differentiating and mature neuronal cells.</text>
</comment>
<comment type="catalytic activity">
    <reaction>
        <text>L-seryl-[protein] + ATP = O-phospho-L-seryl-[protein] + ADP + H(+)</text>
        <dbReference type="Rhea" id="RHEA:17989"/>
        <dbReference type="Rhea" id="RHEA-COMP:9863"/>
        <dbReference type="Rhea" id="RHEA-COMP:11604"/>
        <dbReference type="ChEBI" id="CHEBI:15378"/>
        <dbReference type="ChEBI" id="CHEBI:29999"/>
        <dbReference type="ChEBI" id="CHEBI:30616"/>
        <dbReference type="ChEBI" id="CHEBI:83421"/>
        <dbReference type="ChEBI" id="CHEBI:456216"/>
        <dbReference type="EC" id="2.7.11.1"/>
    </reaction>
</comment>
<comment type="catalytic activity">
    <reaction>
        <text>L-threonyl-[protein] + ATP = O-phospho-L-threonyl-[protein] + ADP + H(+)</text>
        <dbReference type="Rhea" id="RHEA:46608"/>
        <dbReference type="Rhea" id="RHEA-COMP:11060"/>
        <dbReference type="Rhea" id="RHEA-COMP:11605"/>
        <dbReference type="ChEBI" id="CHEBI:15378"/>
        <dbReference type="ChEBI" id="CHEBI:30013"/>
        <dbReference type="ChEBI" id="CHEBI:30616"/>
        <dbReference type="ChEBI" id="CHEBI:61977"/>
        <dbReference type="ChEBI" id="CHEBI:456216"/>
        <dbReference type="EC" id="2.7.11.1"/>
    </reaction>
</comment>
<comment type="cofactor">
    <cofactor>
        <name>Mg(2+)</name>
        <dbReference type="ChEBI" id="CHEBI:18420"/>
    </cofactor>
</comment>
<comment type="activity regulation">
    <text evidence="6 7 8">Activated by binding of S100B which releases autoinhibitory N-lobe interactions, enabling ATP to bind and the autophosphorylation of Ser-282. Thr-442 then undergoes calcium-dependent phosphorylation by STK24/MST3. Interactions between phosphorylated Thr-442 and the N-lobe promote additional structural changes that complete the activation of the kinase. Autoinhibition is also released by the binding of MOB1/MOBKL1A and MOB2/HCCA2 to the N-terminal of STK38L.</text>
</comment>
<comment type="subunit">
    <text evidence="1 6 7">Homodimeric S100B binds two molecules of STK38L. Interacts with MICAL1; leading to inhibit the protein kinase activity by antagonizing activation by MST1/STK4 (By similarity). Interacts with MOB1 and MOB2.</text>
</comment>
<comment type="interaction">
    <interactant intactId="EBI-991501">
        <id>Q9Y2H1</id>
    </interactant>
    <interactant intactId="EBI-295634">
        <id>Q16543</id>
        <label>CDC37</label>
    </interactant>
    <organismsDiffer>false</organismsDiffer>
    <experiments>6</experiments>
</comment>
<comment type="interaction">
    <interactant intactId="EBI-991501">
        <id>Q9Y2H1</id>
    </interactant>
    <interactant intactId="EBI-748229">
        <id>Q9H8S9</id>
        <label>MOB1A</label>
    </interactant>
    <organismsDiffer>false</organismsDiffer>
    <experiments>9</experiments>
</comment>
<comment type="interaction">
    <interactant intactId="EBI-991501">
        <id>Q9Y2H1</id>
    </interactant>
    <interactant intactId="EBI-2558739">
        <id>Q70IA6</id>
        <label>MOB2</label>
    </interactant>
    <organismsDiffer>false</organismsDiffer>
    <experiments>14</experiments>
</comment>
<comment type="subcellular location">
    <subcellularLocation>
        <location>Cytoplasm</location>
    </subcellularLocation>
    <subcellularLocation>
        <location>Cytoplasm</location>
        <location>Cytoskeleton</location>
    </subcellularLocation>
    <subcellularLocation>
        <location>Membrane</location>
    </subcellularLocation>
    <text>Associated with the actin cytoskeleton. Co-localizes with STK24/MST3 in the membrane.</text>
</comment>
<comment type="alternative products">
    <event type="alternative splicing"/>
    <isoform>
        <id>Q9Y2H1-1</id>
        <name>1</name>
        <sequence type="displayed"/>
    </isoform>
    <isoform>
        <id>Q9Y2H1-2</id>
        <name>2</name>
        <sequence type="described" ref="VSP_056233 VSP_056234"/>
    </isoform>
</comment>
<comment type="tissue specificity">
    <text evidence="7">Ubiquitously expressed with highest levels observed in the thymus.</text>
</comment>
<comment type="similarity">
    <text evidence="13">Belongs to the protein kinase superfamily. AGC Ser/Thr protein kinase family.</text>
</comment>